<proteinExistence type="inferred from homology"/>
<name>RS11_PYRAR</name>
<sequence length="138" mass="14691">MSAEQQPQQQQKLRWGIAWIYSSSNNTIITITDLTGAETVARVSGGQVVRADKDKPSPWAAMQAAYKAAQLAMARGINAVHIKVRGPGGYGMKVPGPGASAAIRALARSGLVIGRIEDVTPIPHDIIRPPSGRKGRRV</sequence>
<evidence type="ECO:0000255" key="1">
    <source>
        <dbReference type="HAMAP-Rule" id="MF_01310"/>
    </source>
</evidence>
<evidence type="ECO:0000305" key="2"/>
<feature type="chain" id="PRO_0000294902" description="Small ribosomal subunit protein uS11">
    <location>
        <begin position="1"/>
        <end position="138"/>
    </location>
</feature>
<protein>
    <recommendedName>
        <fullName evidence="1">Small ribosomal subunit protein uS11</fullName>
    </recommendedName>
    <alternativeName>
        <fullName evidence="2">30S ribosomal protein S11</fullName>
    </alternativeName>
</protein>
<reference key="1">
    <citation type="submission" date="2007-04" db="EMBL/GenBank/DDBJ databases">
        <title>Complete sequence of Pyrobaculum arsenaticum DSM 13514.</title>
        <authorList>
            <consortium name="US DOE Joint Genome Institute"/>
            <person name="Copeland A."/>
            <person name="Lucas S."/>
            <person name="Lapidus A."/>
            <person name="Barry K."/>
            <person name="Glavina del Rio T."/>
            <person name="Dalin E."/>
            <person name="Tice H."/>
            <person name="Pitluck S."/>
            <person name="Chain P."/>
            <person name="Malfatti S."/>
            <person name="Shin M."/>
            <person name="Vergez L."/>
            <person name="Schmutz J."/>
            <person name="Larimer F."/>
            <person name="Land M."/>
            <person name="Hauser L."/>
            <person name="Kyrpides N."/>
            <person name="Mikhailova N."/>
            <person name="Cozen A.E."/>
            <person name="Fitz-Gibbon S.T."/>
            <person name="House C.H."/>
            <person name="Saltikov C."/>
            <person name="Lowe T.M."/>
            <person name="Richardson P."/>
        </authorList>
    </citation>
    <scope>NUCLEOTIDE SEQUENCE [LARGE SCALE GENOMIC DNA]</scope>
    <source>
        <strain>ATCC 700994 / DSM 13514 / JCM 11321 / PZ6</strain>
    </source>
</reference>
<dbReference type="EMBL" id="CP000660">
    <property type="protein sequence ID" value="ABP51207.1"/>
    <property type="molecule type" value="Genomic_DNA"/>
</dbReference>
<dbReference type="RefSeq" id="WP_011901113.1">
    <property type="nucleotide sequence ID" value="NC_009376.1"/>
</dbReference>
<dbReference type="SMR" id="A4WLE0"/>
<dbReference type="STRING" id="340102.Pars_1654"/>
<dbReference type="GeneID" id="5056274"/>
<dbReference type="KEGG" id="pas:Pars_1654"/>
<dbReference type="HOGENOM" id="CLU_072439_6_1_2"/>
<dbReference type="OrthoDB" id="12054at2157"/>
<dbReference type="PhylomeDB" id="A4WLE0"/>
<dbReference type="Proteomes" id="UP000001567">
    <property type="component" value="Chromosome"/>
</dbReference>
<dbReference type="GO" id="GO:1990904">
    <property type="term" value="C:ribonucleoprotein complex"/>
    <property type="evidence" value="ECO:0007669"/>
    <property type="project" value="UniProtKB-KW"/>
</dbReference>
<dbReference type="GO" id="GO:0005840">
    <property type="term" value="C:ribosome"/>
    <property type="evidence" value="ECO:0007669"/>
    <property type="project" value="UniProtKB-KW"/>
</dbReference>
<dbReference type="GO" id="GO:0019843">
    <property type="term" value="F:rRNA binding"/>
    <property type="evidence" value="ECO:0007669"/>
    <property type="project" value="UniProtKB-UniRule"/>
</dbReference>
<dbReference type="GO" id="GO:0003735">
    <property type="term" value="F:structural constituent of ribosome"/>
    <property type="evidence" value="ECO:0007669"/>
    <property type="project" value="InterPro"/>
</dbReference>
<dbReference type="GO" id="GO:0006412">
    <property type="term" value="P:translation"/>
    <property type="evidence" value="ECO:0007669"/>
    <property type="project" value="UniProtKB-UniRule"/>
</dbReference>
<dbReference type="FunFam" id="3.30.420.80:FF:000007">
    <property type="entry name" value="30S ribosomal protein S11"/>
    <property type="match status" value="1"/>
</dbReference>
<dbReference type="Gene3D" id="3.30.420.80">
    <property type="entry name" value="Ribosomal protein S11"/>
    <property type="match status" value="1"/>
</dbReference>
<dbReference type="HAMAP" id="MF_01310">
    <property type="entry name" value="Ribosomal_uS11"/>
    <property type="match status" value="1"/>
</dbReference>
<dbReference type="InterPro" id="IPR001971">
    <property type="entry name" value="Ribosomal_uS11"/>
</dbReference>
<dbReference type="InterPro" id="IPR019961">
    <property type="entry name" value="Ribosomal_uS11_archaeal"/>
</dbReference>
<dbReference type="InterPro" id="IPR018102">
    <property type="entry name" value="Ribosomal_uS11_CS"/>
</dbReference>
<dbReference type="InterPro" id="IPR036967">
    <property type="entry name" value="Ribosomal_uS11_sf"/>
</dbReference>
<dbReference type="NCBIfam" id="TIGR03628">
    <property type="entry name" value="arch_S11P"/>
    <property type="match status" value="1"/>
</dbReference>
<dbReference type="NCBIfam" id="NF007176">
    <property type="entry name" value="PRK09607.1"/>
    <property type="match status" value="1"/>
</dbReference>
<dbReference type="PANTHER" id="PTHR11759">
    <property type="entry name" value="40S RIBOSOMAL PROTEIN S14/30S RIBOSOMAL PROTEIN S11"/>
    <property type="match status" value="1"/>
</dbReference>
<dbReference type="Pfam" id="PF00411">
    <property type="entry name" value="Ribosomal_S11"/>
    <property type="match status" value="1"/>
</dbReference>
<dbReference type="PIRSF" id="PIRSF002131">
    <property type="entry name" value="Ribosomal_S11"/>
    <property type="match status" value="1"/>
</dbReference>
<dbReference type="SUPFAM" id="SSF53137">
    <property type="entry name" value="Translational machinery components"/>
    <property type="match status" value="1"/>
</dbReference>
<dbReference type="PROSITE" id="PS00054">
    <property type="entry name" value="RIBOSOMAL_S11"/>
    <property type="match status" value="1"/>
</dbReference>
<organism>
    <name type="scientific">Pyrobaculum arsenaticum (strain DSM 13514 / JCM 11321 / PZ6)</name>
    <dbReference type="NCBI Taxonomy" id="340102"/>
    <lineage>
        <taxon>Archaea</taxon>
        <taxon>Thermoproteota</taxon>
        <taxon>Thermoprotei</taxon>
        <taxon>Thermoproteales</taxon>
        <taxon>Thermoproteaceae</taxon>
        <taxon>Pyrobaculum</taxon>
    </lineage>
</organism>
<keyword id="KW-0687">Ribonucleoprotein</keyword>
<keyword id="KW-0689">Ribosomal protein</keyword>
<keyword id="KW-0694">RNA-binding</keyword>
<keyword id="KW-0699">rRNA-binding</keyword>
<accession>A4WLE0</accession>
<gene>
    <name evidence="1" type="primary">rps11</name>
    <name type="ordered locus">Pars_1654</name>
</gene>
<comment type="function">
    <text evidence="1">Located on the platform of the 30S subunit.</text>
</comment>
<comment type="subunit">
    <text evidence="1">Part of the 30S ribosomal subunit.</text>
</comment>
<comment type="similarity">
    <text evidence="1">Belongs to the universal ribosomal protein uS11 family.</text>
</comment>